<reference key="1">
    <citation type="journal article" date="2003" name="Mech. Dev.">
        <title>Cell-autonomous and signal-dependent expression of liver and intestine marker genes in pluripotent precursor cells from Xenopus embryos.</title>
        <authorList>
            <person name="Chen Y."/>
            <person name="Jurgens K."/>
            <person name="Hollemann T."/>
            <person name="Claussen M."/>
            <person name="Ramadori G."/>
            <person name="Pieler T."/>
        </authorList>
    </citation>
    <scope>NUCLEOTIDE SEQUENCE [MRNA]</scope>
</reference>
<reference key="2">
    <citation type="journal article" date="2004" name="Mech. Dev.">
        <title>Polarized distribution of mRNAs encoding a putative LDL receptor adaptor protein, xARH (autosomal recessive hypercholesterolemia) in Xenopus oocytes.</title>
        <authorList>
            <person name="Zhou Y."/>
            <person name="Zhang J."/>
            <person name="King M.L."/>
        </authorList>
    </citation>
    <scope>NUCLEOTIDE SEQUENCE [MRNA]</scope>
    <scope>FUNCTION</scope>
    <scope>TISSUE SPECIFICITY</scope>
    <scope>INTERACTION WITH LDLR AND THE VITELLOGENIN RECEPTOR</scope>
    <source>
        <tissue>Oocyte</tissue>
    </source>
</reference>
<protein>
    <recommendedName>
        <fullName evidence="7">Low density lipoprotein receptor adapter protein 1-A</fullName>
    </recommendedName>
    <alternativeName>
        <fullName evidence="6">Autosomal recessive hypercholesterolemia protein homolog alpha</fullName>
        <shortName evidence="6">ARH alpha</shortName>
        <shortName evidence="6">xARH alpha</shortName>
    </alternativeName>
    <alternativeName>
        <fullName evidence="8">Phosphotyrosine-binding protein</fullName>
    </alternativeName>
    <alternativeName>
        <fullName evidence="6">Xcat4</fullName>
    </alternativeName>
</protein>
<comment type="function">
    <text evidence="5">Adapter protein (clathrin-associated sorting protein (CLASP)) required for efficient endocytosis of the LDL receptor (LDLR). Also involved in the vitellogenin receptor mediated endocytosis of nutrients during oogenesis.</text>
</comment>
<comment type="subunit">
    <text evidence="2 5">Interacts (via PID domain) with ldlr (via NPXY motif) (PubMed:15327785). Binds to soluble clathrin trimers and to the adapter protein complex 2 (AP-2, beta 2 subunit). Binds to phosphoinositides, which regulate clathrin bud assembly at the cell surface. Interacts with the VLDL receptor (vldlr) (By similarity). Interacts with the vitellogenin receptor (PubMed:15327785).</text>
</comment>
<comment type="subcellular location">
    <subcellularLocation>
        <location evidence="2">Cytoplasm</location>
    </subcellularLocation>
</comment>
<comment type="tissue specificity">
    <text evidence="5">Expressed at high level during oogenesis and embryogenesis. Found in the oocyte vegetal cortex. Found at low level in the adult liver and spleen. Found at very low level in testis and heart.</text>
</comment>
<comment type="developmental stage">
    <text>Expressed throughout oogenesis. Homogeneously distributed in stages I and II oocytes and only later localized primarily to the vegetal cortex. Expressed in early stage embryos, but expression decreases during gastrulation, reaching barely detectable levels by tailbud stages.</text>
</comment>
<comment type="domain">
    <text evidence="2">The [DE]-X(1,2)-F-X-X-[FL]-X-X-X-R motif mediates interaction the AP-2 complex subunit AP2B1.</text>
</comment>
<comment type="domain">
    <text evidence="1">The PID domain mediates interaction with the NPXY internalization motif of LDLR.</text>
</comment>
<sequence>MDALKSAGRAIIRSPSIAKQSWGGGKHKKLPENWTDTRETLLEGMLFHLKYLGMTLVEQPKGEELSATAVKRIVATAKASGKKLQKVILKVSPRGIILYDSTSNQLIENVSIYRISYCTADKMHDKVFAYIAQSQQNETLECHAFLCTKRKMAQAVTLTVAQAFKVAFEFWQVSRDKTEKREKSGSGGEGASSSQSDGSSSITSLKASASANLLDLEDCTKAFDVLNASDNHIEDLFRQNASNENNNIVWELDDGLDEAFARLAESRTNPQVLDIGLTANDLQSEECLSPSSWDKLELNPAEADELFMF</sequence>
<feature type="chain" id="PRO_0000064673" description="Low density lipoprotein receptor adapter protein 1-A">
    <location>
        <begin position="1"/>
        <end position="309"/>
    </location>
</feature>
<feature type="domain" description="PID" evidence="3">
    <location>
        <begin position="41"/>
        <end position="195"/>
    </location>
</feature>
<feature type="region of interest" description="Disordered" evidence="4">
    <location>
        <begin position="179"/>
        <end position="199"/>
    </location>
</feature>
<feature type="region of interest" description="AP-2 complex binding" evidence="2">
    <location>
        <begin position="250"/>
        <end position="277"/>
    </location>
</feature>
<feature type="short sequence motif" description="Clathrin box" evidence="2">
    <location>
        <begin position="213"/>
        <end position="217"/>
    </location>
</feature>
<feature type="short sequence motif" description="[DE]-X(1,2)-F-X-X-[FL]-X-X-X-R motif" evidence="2">
    <location>
        <begin position="258"/>
        <end position="267"/>
    </location>
</feature>
<organism>
    <name type="scientific">Xenopus laevis</name>
    <name type="common">African clawed frog</name>
    <dbReference type="NCBI Taxonomy" id="8355"/>
    <lineage>
        <taxon>Eukaryota</taxon>
        <taxon>Metazoa</taxon>
        <taxon>Chordata</taxon>
        <taxon>Craniata</taxon>
        <taxon>Vertebrata</taxon>
        <taxon>Euteleostomi</taxon>
        <taxon>Amphibia</taxon>
        <taxon>Batrachia</taxon>
        <taxon>Anura</taxon>
        <taxon>Pipoidea</taxon>
        <taxon>Pipidae</taxon>
        <taxon>Xenopodinae</taxon>
        <taxon>Xenopus</taxon>
        <taxon>Xenopus</taxon>
    </lineage>
</organism>
<gene>
    <name evidence="7" type="primary">ldlrap1-a</name>
</gene>
<keyword id="KW-0065">Atherosclerosis</keyword>
<keyword id="KW-0153">Cholesterol metabolism</keyword>
<keyword id="KW-0963">Cytoplasm</keyword>
<keyword id="KW-0254">Endocytosis</keyword>
<keyword id="KW-0380">Hyperlipidemia</keyword>
<keyword id="KW-0443">Lipid metabolism</keyword>
<keyword id="KW-1185">Reference proteome</keyword>
<keyword id="KW-0753">Steroid metabolism</keyword>
<keyword id="KW-1207">Sterol metabolism</keyword>
<name>ARHA_XENLA</name>
<proteinExistence type="evidence at protein level"/>
<evidence type="ECO:0000250" key="1">
    <source>
        <dbReference type="UniProtKB" id="D3ZAR1"/>
    </source>
</evidence>
<evidence type="ECO:0000250" key="2">
    <source>
        <dbReference type="UniProtKB" id="Q5SW96"/>
    </source>
</evidence>
<evidence type="ECO:0000255" key="3">
    <source>
        <dbReference type="PROSITE-ProRule" id="PRU00148"/>
    </source>
</evidence>
<evidence type="ECO:0000256" key="4">
    <source>
        <dbReference type="SAM" id="MobiDB-lite"/>
    </source>
</evidence>
<evidence type="ECO:0000269" key="5">
    <source>
    </source>
</evidence>
<evidence type="ECO:0000303" key="6">
    <source>
    </source>
</evidence>
<evidence type="ECO:0000305" key="7"/>
<evidence type="ECO:0000312" key="8">
    <source>
        <dbReference type="EMBL" id="AAN78447.1"/>
    </source>
</evidence>
<accession>Q801G1</accession>
<dbReference type="EMBL" id="AY183756">
    <property type="protein sequence ID" value="AAN78447.1"/>
    <property type="molecule type" value="mRNA"/>
</dbReference>
<dbReference type="EMBL" id="AY344472">
    <property type="protein sequence ID" value="AAR05662.1"/>
    <property type="molecule type" value="mRNA"/>
</dbReference>
<dbReference type="RefSeq" id="NP_001082560.1">
    <property type="nucleotide sequence ID" value="NM_001089091.1"/>
</dbReference>
<dbReference type="SMR" id="Q801G1"/>
<dbReference type="GeneID" id="398568"/>
<dbReference type="KEGG" id="xla:398568"/>
<dbReference type="AGR" id="Xenbase:XB-GENE-6256035"/>
<dbReference type="CTD" id="398568"/>
<dbReference type="Xenbase" id="XB-GENE-6256035">
    <property type="gene designation" value="ldlrap1.S"/>
</dbReference>
<dbReference type="OMA" id="NNIVWAL"/>
<dbReference type="OrthoDB" id="9999955at2759"/>
<dbReference type="Proteomes" id="UP000186698">
    <property type="component" value="Chromosome 2S"/>
</dbReference>
<dbReference type="Bgee" id="398568">
    <property type="expression patterns" value="Expressed in oocyte and 19 other cell types or tissues"/>
</dbReference>
<dbReference type="GO" id="GO:0005769">
    <property type="term" value="C:early endosome"/>
    <property type="evidence" value="ECO:0000318"/>
    <property type="project" value="GO_Central"/>
</dbReference>
<dbReference type="GO" id="GO:0008203">
    <property type="term" value="P:cholesterol metabolic process"/>
    <property type="evidence" value="ECO:0007669"/>
    <property type="project" value="UniProtKB-KW"/>
</dbReference>
<dbReference type="GO" id="GO:0006897">
    <property type="term" value="P:endocytosis"/>
    <property type="evidence" value="ECO:0007669"/>
    <property type="project" value="UniProtKB-KW"/>
</dbReference>
<dbReference type="CDD" id="cd13159">
    <property type="entry name" value="PTB_LDLRAP-mammal-like"/>
    <property type="match status" value="1"/>
</dbReference>
<dbReference type="FunFam" id="2.30.29.30:FF:000137">
    <property type="entry name" value="Low density lipoprotein receptor adapter protein 1"/>
    <property type="match status" value="1"/>
</dbReference>
<dbReference type="Gene3D" id="2.30.29.30">
    <property type="entry name" value="Pleckstrin-homology domain (PH domain)/Phosphotyrosine-binding domain (PTB)"/>
    <property type="match status" value="1"/>
</dbReference>
<dbReference type="InterPro" id="IPR051133">
    <property type="entry name" value="Adapter_Engulfment-Domain"/>
</dbReference>
<dbReference type="InterPro" id="IPR011993">
    <property type="entry name" value="PH-like_dom_sf"/>
</dbReference>
<dbReference type="InterPro" id="IPR006020">
    <property type="entry name" value="PTB/PI_dom"/>
</dbReference>
<dbReference type="PANTHER" id="PTHR11232:SF35">
    <property type="entry name" value="LOW DENSITY LIPOPROTEIN RECEPTOR ADAPTER PROTEIN 1"/>
    <property type="match status" value="1"/>
</dbReference>
<dbReference type="PANTHER" id="PTHR11232">
    <property type="entry name" value="PHOSPHOTYROSINE INTERACTION DOMAIN-CONTAINING FAMILY MEMBER"/>
    <property type="match status" value="1"/>
</dbReference>
<dbReference type="Pfam" id="PF00640">
    <property type="entry name" value="PID"/>
    <property type="match status" value="1"/>
</dbReference>
<dbReference type="SMART" id="SM00462">
    <property type="entry name" value="PTB"/>
    <property type="match status" value="1"/>
</dbReference>
<dbReference type="SUPFAM" id="SSF50729">
    <property type="entry name" value="PH domain-like"/>
    <property type="match status" value="1"/>
</dbReference>
<dbReference type="PROSITE" id="PS01179">
    <property type="entry name" value="PID"/>
    <property type="match status" value="1"/>
</dbReference>